<feature type="chain" id="PRO_0000253527" description="Gonadotropin-releasing hormone receptor">
    <location>
        <begin position="1"/>
        <end position="328"/>
    </location>
</feature>
<feature type="topological domain" description="Extracellular" evidence="2">
    <location>
        <begin position="1"/>
        <end position="38"/>
    </location>
</feature>
<feature type="transmembrane region" description="Helical; Name=1" evidence="2">
    <location>
        <begin position="39"/>
        <end position="58"/>
    </location>
</feature>
<feature type="topological domain" description="Cytoplasmic" evidence="2">
    <location>
        <begin position="59"/>
        <end position="77"/>
    </location>
</feature>
<feature type="transmembrane region" description="Helical; Name=2" evidence="2">
    <location>
        <begin position="78"/>
        <end position="97"/>
    </location>
</feature>
<feature type="topological domain" description="Extracellular" evidence="2">
    <location>
        <begin position="98"/>
        <end position="115"/>
    </location>
</feature>
<feature type="transmembrane region" description="Helical; Name=3" evidence="2">
    <location>
        <begin position="116"/>
        <end position="137"/>
    </location>
</feature>
<feature type="topological domain" description="Cytoplasmic" evidence="2">
    <location>
        <begin position="138"/>
        <end position="164"/>
    </location>
</feature>
<feature type="transmembrane region" description="Helical; Name=4" evidence="2">
    <location>
        <begin position="165"/>
        <end position="184"/>
    </location>
</feature>
<feature type="topological domain" description="Extracellular" evidence="2">
    <location>
        <begin position="185"/>
        <end position="212"/>
    </location>
</feature>
<feature type="transmembrane region" description="Helical; Name=5" evidence="2">
    <location>
        <begin position="213"/>
        <end position="232"/>
    </location>
</feature>
<feature type="topological domain" description="Cytoplasmic" evidence="2">
    <location>
        <begin position="233"/>
        <end position="281"/>
    </location>
</feature>
<feature type="transmembrane region" description="Helical; Name=6" evidence="2">
    <location>
        <begin position="282"/>
        <end position="300"/>
    </location>
</feature>
<feature type="topological domain" description="Extracellular" evidence="2">
    <location>
        <begin position="301"/>
        <end position="306"/>
    </location>
</feature>
<feature type="transmembrane region" description="Helical; Name=7" evidence="2">
    <location>
        <begin position="307"/>
        <end position="326"/>
    </location>
</feature>
<feature type="topological domain" description="Cytoplasmic" evidence="2">
    <location>
        <begin position="327"/>
        <end position="328"/>
    </location>
</feature>
<feature type="glycosylation site" description="N-linked (GlcNAc...) asparagine" evidence="2">
    <location>
        <position position="18"/>
    </location>
</feature>
<feature type="glycosylation site" description="N-linked (GlcNAc...) asparagine" evidence="2">
    <location>
        <position position="102"/>
    </location>
</feature>
<feature type="disulfide bond" evidence="3">
    <location>
        <begin position="114"/>
        <end position="196"/>
    </location>
</feature>
<sequence length="328" mass="37756">MANSDSPEQNENHCSSINSSIPLTPGSLPTLTLSGKIRVTVTFFLFLLSTIFNTSFLLKLQNWTQRKEKRKKLSRMKLLLKHLTLANLLETLIVMPLDGMWNITVQWYAGELLCKVLSYLKLFSMYAPAFMMVVISLDRSLAITKPLAVKSNSKLGQFMIGLAWLLSSIFAGPQLYIFGMIHLADDSGQTEGFSQCVTHCSFPQWWHQAFYNFFTFSCLFIIPLLIMVICNAKIIFTLTRVLHQDPHKLQLNQSKNNIPRARLRTLKMTVAFATSFTVCWTPYYVLGIWYWFDPDMVNRVSDPVNHFFFLFAFLNPCFNPLIYGYFSL</sequence>
<reference key="1">
    <citation type="thesis" date="2006" institute="Southwest University for Nationalities" country="China">
        <title>Molecular clone and sequence analysis of GnRHR, CGA, FSHB and LHB genes related to spermatogenesis of the Yak.</title>
        <authorList>
            <person name="Yu J.C."/>
        </authorList>
    </citation>
    <scope>NUCLEOTIDE SEQUENCE [GENOMIC DNA]</scope>
</reference>
<proteinExistence type="inferred from homology"/>
<accession>Q19PY9</accession>
<dbReference type="EMBL" id="DQ508146">
    <property type="protein sequence ID" value="ABF60880.1"/>
    <property type="molecule type" value="Genomic_DNA"/>
</dbReference>
<dbReference type="EMBL" id="DQ508144">
    <property type="protein sequence ID" value="ABF60880.1"/>
    <property type="status" value="JOINED"/>
    <property type="molecule type" value="Genomic_DNA"/>
</dbReference>
<dbReference type="EMBL" id="DQ508145">
    <property type="protein sequence ID" value="ABF60880.1"/>
    <property type="status" value="JOINED"/>
    <property type="molecule type" value="Genomic_DNA"/>
</dbReference>
<dbReference type="SMR" id="Q19PY9"/>
<dbReference type="GlyCosmos" id="Q19PY9">
    <property type="glycosylation" value="2 sites, No reported glycans"/>
</dbReference>
<dbReference type="Proteomes" id="UP000694520">
    <property type="component" value="Unplaced"/>
</dbReference>
<dbReference type="GO" id="GO:0005886">
    <property type="term" value="C:plasma membrane"/>
    <property type="evidence" value="ECO:0007669"/>
    <property type="project" value="UniProtKB-SubCell"/>
</dbReference>
<dbReference type="GO" id="GO:0004930">
    <property type="term" value="F:G protein-coupled receptor activity"/>
    <property type="evidence" value="ECO:0007669"/>
    <property type="project" value="UniProtKB-KW"/>
</dbReference>
<dbReference type="GO" id="GO:0042277">
    <property type="term" value="F:peptide binding"/>
    <property type="evidence" value="ECO:0007669"/>
    <property type="project" value="TreeGrafter"/>
</dbReference>
<dbReference type="GO" id="GO:0016500">
    <property type="term" value="F:protein-hormone receptor activity"/>
    <property type="evidence" value="ECO:0007669"/>
    <property type="project" value="InterPro"/>
</dbReference>
<dbReference type="GO" id="GO:0032870">
    <property type="term" value="P:cellular response to hormone stimulus"/>
    <property type="evidence" value="ECO:0007669"/>
    <property type="project" value="TreeGrafter"/>
</dbReference>
<dbReference type="FunFam" id="1.20.1070.10:FF:000203">
    <property type="entry name" value="gonadotropin-releasing hormone receptor"/>
    <property type="match status" value="1"/>
</dbReference>
<dbReference type="Gene3D" id="1.20.1070.10">
    <property type="entry name" value="Rhodopsin 7-helix transmembrane proteins"/>
    <property type="match status" value="1"/>
</dbReference>
<dbReference type="InterPro" id="IPR000276">
    <property type="entry name" value="GPCR_Rhodpsn"/>
</dbReference>
<dbReference type="InterPro" id="IPR017452">
    <property type="entry name" value="GPCR_Rhodpsn_7TM"/>
</dbReference>
<dbReference type="InterPro" id="IPR001658">
    <property type="entry name" value="GphnRH_fam_rcpt"/>
</dbReference>
<dbReference type="PANTHER" id="PTHR24241:SF22">
    <property type="entry name" value="GONADOTROPIN-RELEASING HORMONE RECEPTOR"/>
    <property type="match status" value="1"/>
</dbReference>
<dbReference type="PANTHER" id="PTHR24241">
    <property type="entry name" value="NEUROPEPTIDE RECEPTOR-RELATED G-PROTEIN COUPLED RECEPTOR"/>
    <property type="match status" value="1"/>
</dbReference>
<dbReference type="Pfam" id="PF00001">
    <property type="entry name" value="7tm_1"/>
    <property type="match status" value="1"/>
</dbReference>
<dbReference type="PRINTS" id="PR00529">
    <property type="entry name" value="GNADOTRPHINR"/>
</dbReference>
<dbReference type="PRINTS" id="PR00237">
    <property type="entry name" value="GPCRRHODOPSN"/>
</dbReference>
<dbReference type="SUPFAM" id="SSF81321">
    <property type="entry name" value="Family A G protein-coupled receptor-like"/>
    <property type="match status" value="1"/>
</dbReference>
<dbReference type="PROSITE" id="PS00237">
    <property type="entry name" value="G_PROTEIN_RECEP_F1_1"/>
    <property type="match status" value="1"/>
</dbReference>
<dbReference type="PROSITE" id="PS50262">
    <property type="entry name" value="G_PROTEIN_RECEP_F1_2"/>
    <property type="match status" value="1"/>
</dbReference>
<organism>
    <name type="scientific">Bos mutus grunniens</name>
    <name type="common">Wild yak</name>
    <name type="synonym">Bos grunniens</name>
    <dbReference type="NCBI Taxonomy" id="30521"/>
    <lineage>
        <taxon>Eukaryota</taxon>
        <taxon>Metazoa</taxon>
        <taxon>Chordata</taxon>
        <taxon>Craniata</taxon>
        <taxon>Vertebrata</taxon>
        <taxon>Euteleostomi</taxon>
        <taxon>Mammalia</taxon>
        <taxon>Eutheria</taxon>
        <taxon>Laurasiatheria</taxon>
        <taxon>Artiodactyla</taxon>
        <taxon>Ruminantia</taxon>
        <taxon>Pecora</taxon>
        <taxon>Bovidae</taxon>
        <taxon>Bovinae</taxon>
        <taxon>Bos</taxon>
    </lineage>
</organism>
<comment type="function">
    <text evidence="1">Receptor for gonadotropin releasing hormone (GnRH) that mediates the action of GnRH to stimulate the secretion of the gonadotropic hormones luteinizing hormone (LH) and follicle-stimulating hormone (FSH). This receptor mediates its action by association with G-proteins that activate a phosphatidylinositol-calcium second messenger system (By similarity).</text>
</comment>
<comment type="subcellular location">
    <subcellularLocation>
        <location>Cell membrane</location>
        <topology>Multi-pass membrane protein</topology>
    </subcellularLocation>
</comment>
<comment type="similarity">
    <text evidence="3">Belongs to the G-protein coupled receptor 1 family.</text>
</comment>
<evidence type="ECO:0000250" key="1"/>
<evidence type="ECO:0000255" key="2"/>
<evidence type="ECO:0000255" key="3">
    <source>
        <dbReference type="PROSITE-ProRule" id="PRU00521"/>
    </source>
</evidence>
<gene>
    <name type="primary">GNRHR</name>
</gene>
<name>GNRHR_BOSMU</name>
<keyword id="KW-1003">Cell membrane</keyword>
<keyword id="KW-1015">Disulfide bond</keyword>
<keyword id="KW-0297">G-protein coupled receptor</keyword>
<keyword id="KW-0325">Glycoprotein</keyword>
<keyword id="KW-0472">Membrane</keyword>
<keyword id="KW-0675">Receptor</keyword>
<keyword id="KW-1185">Reference proteome</keyword>
<keyword id="KW-0807">Transducer</keyword>
<keyword id="KW-0812">Transmembrane</keyword>
<keyword id="KW-1133">Transmembrane helix</keyword>
<protein>
    <recommendedName>
        <fullName>Gonadotropin-releasing hormone receptor</fullName>
        <shortName>GnRH receptor</shortName>
        <shortName>GnRH-R</shortName>
    </recommendedName>
</protein>